<sequence>MASVVVVGSQWGDEGKGKITDFLSQEADVVSRYQGGDNAGHTIVFNGQTFKLRLIPSGIFFHDKLAVIGNGVVLNPKSLVEELQYLRDKGVNPDNLRISNRAHVILPYHITLDGAQEKAKAGGKIGTTNKGIGPAYMDKAERIGIRVADLLDKDTFAALLKRNLAEKNQIITKLYDLEPLKFEDIFDDYYAYGQTLKPFVTDTSVVINDALDNGQRVLFEGAQGVMLDIDQGTYPYVTSSNPVAGGVTIGSGVGPSKIDNCVGVLKAYTSRVGDGPFPTELFDEVGDFIRETAHEYGTVTKRPRRIGWFDSVVLRHAKRVSGFTHLSLNCLDVLTGLKTIKVCTAYDLNGETIYHYPASLKELEACKPIYEELPGWDEDITGVKTFEELPTNAQNYLRKLEELVGVKIATFSVGPDREQTNVIDHNIWG</sequence>
<comment type="function">
    <text evidence="1">Plays an important role in the de novo pathway of purine nucleotide biosynthesis. Catalyzes the first committed step in the biosynthesis of AMP from IMP.</text>
</comment>
<comment type="catalytic activity">
    <reaction evidence="1">
        <text>IMP + L-aspartate + GTP = N(6)-(1,2-dicarboxyethyl)-AMP + GDP + phosphate + 2 H(+)</text>
        <dbReference type="Rhea" id="RHEA:15753"/>
        <dbReference type="ChEBI" id="CHEBI:15378"/>
        <dbReference type="ChEBI" id="CHEBI:29991"/>
        <dbReference type="ChEBI" id="CHEBI:37565"/>
        <dbReference type="ChEBI" id="CHEBI:43474"/>
        <dbReference type="ChEBI" id="CHEBI:57567"/>
        <dbReference type="ChEBI" id="CHEBI:58053"/>
        <dbReference type="ChEBI" id="CHEBI:58189"/>
        <dbReference type="EC" id="6.3.4.4"/>
    </reaction>
</comment>
<comment type="cofactor">
    <cofactor evidence="1">
        <name>Mg(2+)</name>
        <dbReference type="ChEBI" id="CHEBI:18420"/>
    </cofactor>
    <text evidence="1">Binds 1 Mg(2+) ion per subunit.</text>
</comment>
<comment type="pathway">
    <text evidence="1">Purine metabolism; AMP biosynthesis via de novo pathway; AMP from IMP: step 1/2.</text>
</comment>
<comment type="subunit">
    <text evidence="1">Homodimer.</text>
</comment>
<comment type="subcellular location">
    <subcellularLocation>
        <location evidence="1">Cytoplasm</location>
    </subcellularLocation>
</comment>
<comment type="similarity">
    <text evidence="1">Belongs to the adenylosuccinate synthetase family.</text>
</comment>
<evidence type="ECO:0000255" key="1">
    <source>
        <dbReference type="HAMAP-Rule" id="MF_00011"/>
    </source>
</evidence>
<name>PURA_LACPL</name>
<keyword id="KW-0963">Cytoplasm</keyword>
<keyword id="KW-0342">GTP-binding</keyword>
<keyword id="KW-0436">Ligase</keyword>
<keyword id="KW-0460">Magnesium</keyword>
<keyword id="KW-0479">Metal-binding</keyword>
<keyword id="KW-0547">Nucleotide-binding</keyword>
<keyword id="KW-0658">Purine biosynthesis</keyword>
<keyword id="KW-1185">Reference proteome</keyword>
<organism>
    <name type="scientific">Lactiplantibacillus plantarum (strain ATCC BAA-793 / NCIMB 8826 / WCFS1)</name>
    <name type="common">Lactobacillus plantarum</name>
    <dbReference type="NCBI Taxonomy" id="220668"/>
    <lineage>
        <taxon>Bacteria</taxon>
        <taxon>Bacillati</taxon>
        <taxon>Bacillota</taxon>
        <taxon>Bacilli</taxon>
        <taxon>Lactobacillales</taxon>
        <taxon>Lactobacillaceae</taxon>
        <taxon>Lactiplantibacillus</taxon>
    </lineage>
</organism>
<proteinExistence type="inferred from homology"/>
<accession>Q88SV6</accession>
<accession>F9UTG3</accession>
<dbReference type="EC" id="6.3.4.4" evidence="1"/>
<dbReference type="EMBL" id="AL935263">
    <property type="protein sequence ID" value="CCC80281.1"/>
    <property type="molecule type" value="Genomic_DNA"/>
</dbReference>
<dbReference type="RefSeq" id="WP_003643473.1">
    <property type="nucleotide sequence ID" value="NC_004567.2"/>
</dbReference>
<dbReference type="RefSeq" id="YP_004890795.1">
    <property type="nucleotide sequence ID" value="NC_004567.2"/>
</dbReference>
<dbReference type="SMR" id="Q88SV6"/>
<dbReference type="STRING" id="220668.lp_3270"/>
<dbReference type="EnsemblBacteria" id="CCC80281">
    <property type="protein sequence ID" value="CCC80281"/>
    <property type="gene ID" value="lp_3270"/>
</dbReference>
<dbReference type="KEGG" id="lpl:lp_3270"/>
<dbReference type="PATRIC" id="fig|220668.9.peg.2730"/>
<dbReference type="eggNOG" id="COG0104">
    <property type="taxonomic scope" value="Bacteria"/>
</dbReference>
<dbReference type="HOGENOM" id="CLU_029848_0_0_9"/>
<dbReference type="OrthoDB" id="9807553at2"/>
<dbReference type="PhylomeDB" id="Q88SV6"/>
<dbReference type="UniPathway" id="UPA00075">
    <property type="reaction ID" value="UER00335"/>
</dbReference>
<dbReference type="Proteomes" id="UP000000432">
    <property type="component" value="Chromosome"/>
</dbReference>
<dbReference type="GO" id="GO:0005737">
    <property type="term" value="C:cytoplasm"/>
    <property type="evidence" value="ECO:0007669"/>
    <property type="project" value="UniProtKB-SubCell"/>
</dbReference>
<dbReference type="GO" id="GO:0004019">
    <property type="term" value="F:adenylosuccinate synthase activity"/>
    <property type="evidence" value="ECO:0007669"/>
    <property type="project" value="UniProtKB-UniRule"/>
</dbReference>
<dbReference type="GO" id="GO:0005525">
    <property type="term" value="F:GTP binding"/>
    <property type="evidence" value="ECO:0007669"/>
    <property type="project" value="UniProtKB-UniRule"/>
</dbReference>
<dbReference type="GO" id="GO:0000287">
    <property type="term" value="F:magnesium ion binding"/>
    <property type="evidence" value="ECO:0007669"/>
    <property type="project" value="UniProtKB-UniRule"/>
</dbReference>
<dbReference type="GO" id="GO:0044208">
    <property type="term" value="P:'de novo' AMP biosynthetic process"/>
    <property type="evidence" value="ECO:0007669"/>
    <property type="project" value="UniProtKB-UniRule"/>
</dbReference>
<dbReference type="GO" id="GO:0046040">
    <property type="term" value="P:IMP metabolic process"/>
    <property type="evidence" value="ECO:0007669"/>
    <property type="project" value="TreeGrafter"/>
</dbReference>
<dbReference type="CDD" id="cd03108">
    <property type="entry name" value="AdSS"/>
    <property type="match status" value="1"/>
</dbReference>
<dbReference type="FunFam" id="1.10.300.10:FF:000001">
    <property type="entry name" value="Adenylosuccinate synthetase"/>
    <property type="match status" value="1"/>
</dbReference>
<dbReference type="FunFam" id="3.90.170.10:FF:000001">
    <property type="entry name" value="Adenylosuccinate synthetase"/>
    <property type="match status" value="1"/>
</dbReference>
<dbReference type="Gene3D" id="3.40.440.10">
    <property type="entry name" value="Adenylosuccinate Synthetase, subunit A, domain 1"/>
    <property type="match status" value="1"/>
</dbReference>
<dbReference type="Gene3D" id="1.10.300.10">
    <property type="entry name" value="Adenylosuccinate Synthetase, subunit A, domain 2"/>
    <property type="match status" value="1"/>
</dbReference>
<dbReference type="Gene3D" id="3.90.170.10">
    <property type="entry name" value="Adenylosuccinate Synthetase, subunit A, domain 3"/>
    <property type="match status" value="1"/>
</dbReference>
<dbReference type="HAMAP" id="MF_00011">
    <property type="entry name" value="Adenylosucc_synth"/>
    <property type="match status" value="1"/>
</dbReference>
<dbReference type="InterPro" id="IPR018220">
    <property type="entry name" value="Adenylosuccin_syn_GTP-bd"/>
</dbReference>
<dbReference type="InterPro" id="IPR033128">
    <property type="entry name" value="Adenylosuccin_syn_Lys_AS"/>
</dbReference>
<dbReference type="InterPro" id="IPR042109">
    <property type="entry name" value="Adenylosuccinate_synth_dom1"/>
</dbReference>
<dbReference type="InterPro" id="IPR042110">
    <property type="entry name" value="Adenylosuccinate_synth_dom2"/>
</dbReference>
<dbReference type="InterPro" id="IPR042111">
    <property type="entry name" value="Adenylosuccinate_synth_dom3"/>
</dbReference>
<dbReference type="InterPro" id="IPR001114">
    <property type="entry name" value="Adenylosuccinate_synthetase"/>
</dbReference>
<dbReference type="InterPro" id="IPR027417">
    <property type="entry name" value="P-loop_NTPase"/>
</dbReference>
<dbReference type="NCBIfam" id="NF002223">
    <property type="entry name" value="PRK01117.1"/>
    <property type="match status" value="1"/>
</dbReference>
<dbReference type="NCBIfam" id="TIGR00184">
    <property type="entry name" value="purA"/>
    <property type="match status" value="1"/>
</dbReference>
<dbReference type="PANTHER" id="PTHR11846">
    <property type="entry name" value="ADENYLOSUCCINATE SYNTHETASE"/>
    <property type="match status" value="1"/>
</dbReference>
<dbReference type="PANTHER" id="PTHR11846:SF0">
    <property type="entry name" value="ADENYLOSUCCINATE SYNTHETASE"/>
    <property type="match status" value="1"/>
</dbReference>
<dbReference type="Pfam" id="PF00709">
    <property type="entry name" value="Adenylsucc_synt"/>
    <property type="match status" value="1"/>
</dbReference>
<dbReference type="SMART" id="SM00788">
    <property type="entry name" value="Adenylsucc_synt"/>
    <property type="match status" value="1"/>
</dbReference>
<dbReference type="SUPFAM" id="SSF52540">
    <property type="entry name" value="P-loop containing nucleoside triphosphate hydrolases"/>
    <property type="match status" value="1"/>
</dbReference>
<dbReference type="PROSITE" id="PS01266">
    <property type="entry name" value="ADENYLOSUCCIN_SYN_1"/>
    <property type="match status" value="1"/>
</dbReference>
<dbReference type="PROSITE" id="PS00513">
    <property type="entry name" value="ADENYLOSUCCIN_SYN_2"/>
    <property type="match status" value="1"/>
</dbReference>
<protein>
    <recommendedName>
        <fullName evidence="1">Adenylosuccinate synthetase</fullName>
        <shortName evidence="1">AMPSase</shortName>
        <shortName evidence="1">AdSS</shortName>
        <ecNumber evidence="1">6.3.4.4</ecNumber>
    </recommendedName>
    <alternativeName>
        <fullName evidence="1">IMP--aspartate ligase</fullName>
    </alternativeName>
</protein>
<feature type="chain" id="PRO_0000095189" description="Adenylosuccinate synthetase">
    <location>
        <begin position="1"/>
        <end position="429"/>
    </location>
</feature>
<feature type="active site" description="Proton acceptor" evidence="1">
    <location>
        <position position="13"/>
    </location>
</feature>
<feature type="active site" description="Proton donor" evidence="1">
    <location>
        <position position="41"/>
    </location>
</feature>
<feature type="binding site" evidence="1">
    <location>
        <begin position="12"/>
        <end position="18"/>
    </location>
    <ligand>
        <name>GTP</name>
        <dbReference type="ChEBI" id="CHEBI:37565"/>
    </ligand>
</feature>
<feature type="binding site" description="in other chain" evidence="1">
    <location>
        <begin position="13"/>
        <end position="16"/>
    </location>
    <ligand>
        <name>IMP</name>
        <dbReference type="ChEBI" id="CHEBI:58053"/>
        <note>ligand shared between dimeric partners</note>
    </ligand>
</feature>
<feature type="binding site" evidence="1">
    <location>
        <position position="13"/>
    </location>
    <ligand>
        <name>Mg(2+)</name>
        <dbReference type="ChEBI" id="CHEBI:18420"/>
    </ligand>
</feature>
<feature type="binding site" description="in other chain" evidence="1">
    <location>
        <begin position="38"/>
        <end position="41"/>
    </location>
    <ligand>
        <name>IMP</name>
        <dbReference type="ChEBI" id="CHEBI:58053"/>
        <note>ligand shared between dimeric partners</note>
    </ligand>
</feature>
<feature type="binding site" evidence="1">
    <location>
        <begin position="40"/>
        <end position="42"/>
    </location>
    <ligand>
        <name>GTP</name>
        <dbReference type="ChEBI" id="CHEBI:37565"/>
    </ligand>
</feature>
<feature type="binding site" evidence="1">
    <location>
        <position position="40"/>
    </location>
    <ligand>
        <name>Mg(2+)</name>
        <dbReference type="ChEBI" id="CHEBI:18420"/>
    </ligand>
</feature>
<feature type="binding site" description="in other chain" evidence="1">
    <location>
        <position position="128"/>
    </location>
    <ligand>
        <name>IMP</name>
        <dbReference type="ChEBI" id="CHEBI:58053"/>
        <note>ligand shared between dimeric partners</note>
    </ligand>
</feature>
<feature type="binding site" evidence="1">
    <location>
        <position position="142"/>
    </location>
    <ligand>
        <name>IMP</name>
        <dbReference type="ChEBI" id="CHEBI:58053"/>
        <note>ligand shared between dimeric partners</note>
    </ligand>
</feature>
<feature type="binding site" description="in other chain" evidence="1">
    <location>
        <position position="223"/>
    </location>
    <ligand>
        <name>IMP</name>
        <dbReference type="ChEBI" id="CHEBI:58053"/>
        <note>ligand shared between dimeric partners</note>
    </ligand>
</feature>
<feature type="binding site" description="in other chain" evidence="1">
    <location>
        <position position="238"/>
    </location>
    <ligand>
        <name>IMP</name>
        <dbReference type="ChEBI" id="CHEBI:58053"/>
        <note>ligand shared between dimeric partners</note>
    </ligand>
</feature>
<feature type="binding site" evidence="1">
    <location>
        <begin position="298"/>
        <end position="304"/>
    </location>
    <ligand>
        <name>substrate</name>
    </ligand>
</feature>
<feature type="binding site" description="in other chain" evidence="1">
    <location>
        <position position="302"/>
    </location>
    <ligand>
        <name>IMP</name>
        <dbReference type="ChEBI" id="CHEBI:58053"/>
        <note>ligand shared between dimeric partners</note>
    </ligand>
</feature>
<feature type="binding site" evidence="1">
    <location>
        <position position="304"/>
    </location>
    <ligand>
        <name>GTP</name>
        <dbReference type="ChEBI" id="CHEBI:37565"/>
    </ligand>
</feature>
<feature type="binding site" evidence="1">
    <location>
        <begin position="330"/>
        <end position="332"/>
    </location>
    <ligand>
        <name>GTP</name>
        <dbReference type="ChEBI" id="CHEBI:37565"/>
    </ligand>
</feature>
<feature type="binding site" evidence="1">
    <location>
        <begin position="412"/>
        <end position="414"/>
    </location>
    <ligand>
        <name>GTP</name>
        <dbReference type="ChEBI" id="CHEBI:37565"/>
    </ligand>
</feature>
<gene>
    <name evidence="1" type="primary">purA</name>
    <name type="ordered locus">lp_3270</name>
</gene>
<reference key="1">
    <citation type="journal article" date="2003" name="Proc. Natl. Acad. Sci. U.S.A.">
        <title>Complete genome sequence of Lactobacillus plantarum WCFS1.</title>
        <authorList>
            <person name="Kleerebezem M."/>
            <person name="Boekhorst J."/>
            <person name="van Kranenburg R."/>
            <person name="Molenaar D."/>
            <person name="Kuipers O.P."/>
            <person name="Leer R."/>
            <person name="Tarchini R."/>
            <person name="Peters S.A."/>
            <person name="Sandbrink H.M."/>
            <person name="Fiers M.W.E.J."/>
            <person name="Stiekema W."/>
            <person name="Klein Lankhorst R.M."/>
            <person name="Bron P.A."/>
            <person name="Hoffer S.M."/>
            <person name="Nierop Groot M.N."/>
            <person name="Kerkhoven R."/>
            <person name="De Vries M."/>
            <person name="Ursing B."/>
            <person name="De Vos W.M."/>
            <person name="Siezen R.J."/>
        </authorList>
    </citation>
    <scope>NUCLEOTIDE SEQUENCE [LARGE SCALE GENOMIC DNA]</scope>
    <source>
        <strain>ATCC BAA-793 / NCIMB 8826 / WCFS1</strain>
    </source>
</reference>
<reference key="2">
    <citation type="journal article" date="2012" name="J. Bacteriol.">
        <title>Complete resequencing and reannotation of the Lactobacillus plantarum WCFS1 genome.</title>
        <authorList>
            <person name="Siezen R.J."/>
            <person name="Francke C."/>
            <person name="Renckens B."/>
            <person name="Boekhorst J."/>
            <person name="Wels M."/>
            <person name="Kleerebezem M."/>
            <person name="van Hijum S.A."/>
        </authorList>
    </citation>
    <scope>NUCLEOTIDE SEQUENCE [LARGE SCALE GENOMIC DNA]</scope>
    <scope>GENOME REANNOTATION</scope>
    <source>
        <strain>ATCC BAA-793 / NCIMB 8826 / WCFS1</strain>
    </source>
</reference>